<dbReference type="EC" id="3.1.3.5" evidence="1"/>
<dbReference type="EMBL" id="CP000030">
    <property type="protein sequence ID" value="AAV86496.1"/>
    <property type="molecule type" value="Genomic_DNA"/>
</dbReference>
<dbReference type="RefSeq" id="WP_010264032.1">
    <property type="nucleotide sequence ID" value="NC_004842.2"/>
</dbReference>
<dbReference type="SMR" id="Q5PB34"/>
<dbReference type="KEGG" id="ama:AM451"/>
<dbReference type="HOGENOM" id="CLU_045192_1_2_5"/>
<dbReference type="GO" id="GO:0005737">
    <property type="term" value="C:cytoplasm"/>
    <property type="evidence" value="ECO:0007669"/>
    <property type="project" value="UniProtKB-SubCell"/>
</dbReference>
<dbReference type="GO" id="GO:0008253">
    <property type="term" value="F:5'-nucleotidase activity"/>
    <property type="evidence" value="ECO:0007669"/>
    <property type="project" value="UniProtKB-UniRule"/>
</dbReference>
<dbReference type="GO" id="GO:0046872">
    <property type="term" value="F:metal ion binding"/>
    <property type="evidence" value="ECO:0007669"/>
    <property type="project" value="UniProtKB-UniRule"/>
</dbReference>
<dbReference type="GO" id="GO:0000166">
    <property type="term" value="F:nucleotide binding"/>
    <property type="evidence" value="ECO:0007669"/>
    <property type="project" value="UniProtKB-KW"/>
</dbReference>
<dbReference type="Gene3D" id="3.40.1210.10">
    <property type="entry name" value="Survival protein SurE-like phosphatase/nucleotidase"/>
    <property type="match status" value="1"/>
</dbReference>
<dbReference type="HAMAP" id="MF_00060">
    <property type="entry name" value="SurE"/>
    <property type="match status" value="1"/>
</dbReference>
<dbReference type="InterPro" id="IPR030048">
    <property type="entry name" value="SurE"/>
</dbReference>
<dbReference type="InterPro" id="IPR002828">
    <property type="entry name" value="SurE-like_Pase/nucleotidase"/>
</dbReference>
<dbReference type="InterPro" id="IPR036523">
    <property type="entry name" value="SurE-like_sf"/>
</dbReference>
<dbReference type="NCBIfam" id="TIGR00087">
    <property type="entry name" value="surE"/>
    <property type="match status" value="1"/>
</dbReference>
<dbReference type="PANTHER" id="PTHR30457">
    <property type="entry name" value="5'-NUCLEOTIDASE SURE"/>
    <property type="match status" value="1"/>
</dbReference>
<dbReference type="PANTHER" id="PTHR30457:SF0">
    <property type="entry name" value="PHOSPHATASE, PUTATIVE (AFU_ORTHOLOGUE AFUA_4G01070)-RELATED"/>
    <property type="match status" value="1"/>
</dbReference>
<dbReference type="Pfam" id="PF01975">
    <property type="entry name" value="SurE"/>
    <property type="match status" value="1"/>
</dbReference>
<dbReference type="SUPFAM" id="SSF64167">
    <property type="entry name" value="SurE-like"/>
    <property type="match status" value="1"/>
</dbReference>
<accession>Q5PB34</accession>
<feature type="chain" id="PRO_0000235590" description="5'-nucleotidase SurE">
    <location>
        <begin position="1"/>
        <end position="261"/>
    </location>
</feature>
<feature type="binding site" evidence="1">
    <location>
        <position position="8"/>
    </location>
    <ligand>
        <name>a divalent metal cation</name>
        <dbReference type="ChEBI" id="CHEBI:60240"/>
    </ligand>
</feature>
<feature type="binding site" evidence="1">
    <location>
        <position position="9"/>
    </location>
    <ligand>
        <name>a divalent metal cation</name>
        <dbReference type="ChEBI" id="CHEBI:60240"/>
    </ligand>
</feature>
<feature type="binding site" evidence="1">
    <location>
        <position position="40"/>
    </location>
    <ligand>
        <name>a divalent metal cation</name>
        <dbReference type="ChEBI" id="CHEBI:60240"/>
    </ligand>
</feature>
<feature type="binding site" evidence="1">
    <location>
        <position position="94"/>
    </location>
    <ligand>
        <name>a divalent metal cation</name>
        <dbReference type="ChEBI" id="CHEBI:60240"/>
    </ligand>
</feature>
<name>SURE_ANAMM</name>
<reference key="1">
    <citation type="journal article" date="2005" name="Proc. Natl. Acad. Sci. U.S.A.">
        <title>Complete genome sequencing of Anaplasma marginale reveals that the surface is skewed to two superfamilies of outer membrane proteins.</title>
        <authorList>
            <person name="Brayton K.A."/>
            <person name="Kappmeyer L.S."/>
            <person name="Herndon D.R."/>
            <person name="Dark M.J."/>
            <person name="Tibbals D.L."/>
            <person name="Palmer G.H."/>
            <person name="McGuire T.C."/>
            <person name="Knowles D.P. Jr."/>
        </authorList>
    </citation>
    <scope>NUCLEOTIDE SEQUENCE [LARGE SCALE GENOMIC DNA]</scope>
    <source>
        <strain>St. Maries</strain>
    </source>
</reference>
<gene>
    <name evidence="1" type="primary">surE</name>
    <name type="ordered locus">AM451</name>
</gene>
<keyword id="KW-0963">Cytoplasm</keyword>
<keyword id="KW-0378">Hydrolase</keyword>
<keyword id="KW-0479">Metal-binding</keyword>
<keyword id="KW-0547">Nucleotide-binding</keyword>
<protein>
    <recommendedName>
        <fullName evidence="1">5'-nucleotidase SurE</fullName>
        <ecNumber evidence="1">3.1.3.5</ecNumber>
    </recommendedName>
    <alternativeName>
        <fullName evidence="1">Nucleoside 5'-monophosphate phosphohydrolase</fullName>
    </alternativeName>
</protein>
<proteinExistence type="inferred from homology"/>
<sequence>MRVLLTNDDGFDSVGMRVLRDVVSGHFAEVWVSAPARDCSAASRALSVRTPIKTHMRGEREFVVHGTPADSAVIGICEMTSTGKRPDLVISGINYGANTGFTVPYSGTIAAAAAAFDIGVPAIAISQQYNGKRCDNNVETSWQNSRKSVMALVSRLLRDTMWHGKCVMSINVPYSDVQGVKFAGHSCDDGHIKWDGPSMERREITSGDGRCVSYVFDDMRSPNSNDNASDTQLLEQGYIVVTPIGHSMTDHAILDKYCGLQ</sequence>
<evidence type="ECO:0000255" key="1">
    <source>
        <dbReference type="HAMAP-Rule" id="MF_00060"/>
    </source>
</evidence>
<comment type="function">
    <text evidence="1">Nucleotidase that shows phosphatase activity on nucleoside 5'-monophosphates.</text>
</comment>
<comment type="catalytic activity">
    <reaction evidence="1">
        <text>a ribonucleoside 5'-phosphate + H2O = a ribonucleoside + phosphate</text>
        <dbReference type="Rhea" id="RHEA:12484"/>
        <dbReference type="ChEBI" id="CHEBI:15377"/>
        <dbReference type="ChEBI" id="CHEBI:18254"/>
        <dbReference type="ChEBI" id="CHEBI:43474"/>
        <dbReference type="ChEBI" id="CHEBI:58043"/>
        <dbReference type="EC" id="3.1.3.5"/>
    </reaction>
</comment>
<comment type="cofactor">
    <cofactor evidence="1">
        <name>a divalent metal cation</name>
        <dbReference type="ChEBI" id="CHEBI:60240"/>
    </cofactor>
    <text evidence="1">Binds 1 divalent metal cation per subunit.</text>
</comment>
<comment type="subcellular location">
    <subcellularLocation>
        <location evidence="1">Cytoplasm</location>
    </subcellularLocation>
</comment>
<comment type="similarity">
    <text evidence="1">Belongs to the SurE nucleotidase family.</text>
</comment>
<organism>
    <name type="scientific">Anaplasma marginale (strain St. Maries)</name>
    <dbReference type="NCBI Taxonomy" id="234826"/>
    <lineage>
        <taxon>Bacteria</taxon>
        <taxon>Pseudomonadati</taxon>
        <taxon>Pseudomonadota</taxon>
        <taxon>Alphaproteobacteria</taxon>
        <taxon>Rickettsiales</taxon>
        <taxon>Anaplasmataceae</taxon>
        <taxon>Anaplasma</taxon>
    </lineage>
</organism>